<proteinExistence type="inferred from homology"/>
<sequence>MANKKIRVRYAPSPTGHLHIGNARTALFNYLFARHNKGTLVLRIEDADTERNVEGGAESQIENLHWLGIDWDEGPDIGGDYGPYKQSERKDIYQKYIDQLLEEGKAYYSFKTEEELEAQREEQRAMGIAPHYVYEYEGMTTDEIKQAQAEARAKGLKPVVRIHIPEGVTYEWDDIVKGHLSFESDTIGGDFVIQKRDGMPTYNFAVVIDDHLMEISHVLRGDDHISNTPKQLCVYEALGWEAPVFGHMTLIINSATGKKLSKRDESVLQFIEQYRELVSCQKPCSTSSSLLGWSPVGESEIFSKREFIKQFDPARLSKSPAAFDQKKLDWVNNQYMKTADRDELLDLALHNLQEAGLVEANPAPGKMEWVRQLVNMYANQMSYTKQIVDLSKIFFTEAKYLTDEEVEEIKKDEARPAIEEFKKQLDKLDNFTAKKIMGAIMATRRETGIKGRKLFMPIRIATTRSMVGPGIGEAMELMGKDTVMKHLDLTLKQLSEAGIE</sequence>
<name>SYE_LACDE</name>
<keyword id="KW-0030">Aminoacyl-tRNA synthetase</keyword>
<keyword id="KW-0067">ATP-binding</keyword>
<keyword id="KW-0963">Cytoplasm</keyword>
<keyword id="KW-0436">Ligase</keyword>
<keyword id="KW-0547">Nucleotide-binding</keyword>
<keyword id="KW-0648">Protein biosynthesis</keyword>
<evidence type="ECO:0000255" key="1">
    <source>
        <dbReference type="HAMAP-Rule" id="MF_00022"/>
    </source>
</evidence>
<feature type="chain" id="PRO_0000119582" description="Glutamate--tRNA ligase">
    <location>
        <begin position="1"/>
        <end position="500"/>
    </location>
</feature>
<feature type="short sequence motif" description="'HIGH' region" evidence="1">
    <location>
        <begin position="12"/>
        <end position="22"/>
    </location>
</feature>
<feature type="short sequence motif" description="'KMSKS' region" evidence="1">
    <location>
        <begin position="259"/>
        <end position="263"/>
    </location>
</feature>
<feature type="binding site" evidence="1">
    <location>
        <position position="262"/>
    </location>
    <ligand>
        <name>ATP</name>
        <dbReference type="ChEBI" id="CHEBI:30616"/>
    </ligand>
</feature>
<organism>
    <name type="scientific">Lactobacillus delbrueckii subsp. bulgaricus</name>
    <dbReference type="NCBI Taxonomy" id="1585"/>
    <lineage>
        <taxon>Bacteria</taxon>
        <taxon>Bacillati</taxon>
        <taxon>Bacillota</taxon>
        <taxon>Bacilli</taxon>
        <taxon>Lactobacillales</taxon>
        <taxon>Lactobacillaceae</taxon>
        <taxon>Lactobacillus</taxon>
    </lineage>
</organism>
<accession>O86083</accession>
<gene>
    <name evidence="1" type="primary">gltX</name>
</gene>
<dbReference type="EC" id="6.1.1.17" evidence="1"/>
<dbReference type="EMBL" id="AF084366">
    <property type="protein sequence ID" value="AAC32611.1"/>
    <property type="molecule type" value="Genomic_DNA"/>
</dbReference>
<dbReference type="SMR" id="O86083"/>
<dbReference type="GO" id="GO:0005829">
    <property type="term" value="C:cytosol"/>
    <property type="evidence" value="ECO:0007669"/>
    <property type="project" value="TreeGrafter"/>
</dbReference>
<dbReference type="GO" id="GO:0005524">
    <property type="term" value="F:ATP binding"/>
    <property type="evidence" value="ECO:0007669"/>
    <property type="project" value="UniProtKB-UniRule"/>
</dbReference>
<dbReference type="GO" id="GO:0004818">
    <property type="term" value="F:glutamate-tRNA ligase activity"/>
    <property type="evidence" value="ECO:0007669"/>
    <property type="project" value="UniProtKB-UniRule"/>
</dbReference>
<dbReference type="GO" id="GO:0000049">
    <property type="term" value="F:tRNA binding"/>
    <property type="evidence" value="ECO:0007669"/>
    <property type="project" value="InterPro"/>
</dbReference>
<dbReference type="GO" id="GO:0008270">
    <property type="term" value="F:zinc ion binding"/>
    <property type="evidence" value="ECO:0007669"/>
    <property type="project" value="InterPro"/>
</dbReference>
<dbReference type="GO" id="GO:0006424">
    <property type="term" value="P:glutamyl-tRNA aminoacylation"/>
    <property type="evidence" value="ECO:0007669"/>
    <property type="project" value="UniProtKB-UniRule"/>
</dbReference>
<dbReference type="CDD" id="cd00808">
    <property type="entry name" value="GluRS_core"/>
    <property type="match status" value="1"/>
</dbReference>
<dbReference type="FunFam" id="3.40.50.620:FF:000007">
    <property type="entry name" value="Glutamate--tRNA ligase"/>
    <property type="match status" value="1"/>
</dbReference>
<dbReference type="Gene3D" id="1.10.10.350">
    <property type="match status" value="1"/>
</dbReference>
<dbReference type="Gene3D" id="3.40.50.620">
    <property type="entry name" value="HUPs"/>
    <property type="match status" value="1"/>
</dbReference>
<dbReference type="HAMAP" id="MF_00022">
    <property type="entry name" value="Glu_tRNA_synth_type1"/>
    <property type="match status" value="1"/>
</dbReference>
<dbReference type="InterPro" id="IPR045462">
    <property type="entry name" value="aa-tRNA-synth_I_cd-bd"/>
</dbReference>
<dbReference type="InterPro" id="IPR020751">
    <property type="entry name" value="aa-tRNA-synth_I_codon-bd_sub2"/>
</dbReference>
<dbReference type="InterPro" id="IPR001412">
    <property type="entry name" value="aa-tRNA-synth_I_CS"/>
</dbReference>
<dbReference type="InterPro" id="IPR008925">
    <property type="entry name" value="aa_tRNA-synth_I_cd-bd_sf"/>
</dbReference>
<dbReference type="InterPro" id="IPR004527">
    <property type="entry name" value="Glu-tRNA-ligase_bac/mito"/>
</dbReference>
<dbReference type="InterPro" id="IPR000924">
    <property type="entry name" value="Glu/Gln-tRNA-synth"/>
</dbReference>
<dbReference type="InterPro" id="IPR020058">
    <property type="entry name" value="Glu/Gln-tRNA-synth_Ib_cat-dom"/>
</dbReference>
<dbReference type="InterPro" id="IPR049940">
    <property type="entry name" value="GluQ/Sye"/>
</dbReference>
<dbReference type="InterPro" id="IPR033910">
    <property type="entry name" value="GluRS_core"/>
</dbReference>
<dbReference type="InterPro" id="IPR014729">
    <property type="entry name" value="Rossmann-like_a/b/a_fold"/>
</dbReference>
<dbReference type="NCBIfam" id="TIGR00464">
    <property type="entry name" value="gltX_bact"/>
    <property type="match status" value="1"/>
</dbReference>
<dbReference type="PANTHER" id="PTHR43311">
    <property type="entry name" value="GLUTAMATE--TRNA LIGASE"/>
    <property type="match status" value="1"/>
</dbReference>
<dbReference type="PANTHER" id="PTHR43311:SF2">
    <property type="entry name" value="GLUTAMATE--TRNA LIGASE, MITOCHONDRIAL-RELATED"/>
    <property type="match status" value="1"/>
</dbReference>
<dbReference type="Pfam" id="PF19269">
    <property type="entry name" value="Anticodon_2"/>
    <property type="match status" value="1"/>
</dbReference>
<dbReference type="Pfam" id="PF00749">
    <property type="entry name" value="tRNA-synt_1c"/>
    <property type="match status" value="1"/>
</dbReference>
<dbReference type="PRINTS" id="PR00987">
    <property type="entry name" value="TRNASYNTHGLU"/>
</dbReference>
<dbReference type="SUPFAM" id="SSF48163">
    <property type="entry name" value="An anticodon-binding domain of class I aminoacyl-tRNA synthetases"/>
    <property type="match status" value="1"/>
</dbReference>
<dbReference type="SUPFAM" id="SSF52374">
    <property type="entry name" value="Nucleotidylyl transferase"/>
    <property type="match status" value="1"/>
</dbReference>
<dbReference type="PROSITE" id="PS00178">
    <property type="entry name" value="AA_TRNA_LIGASE_I"/>
    <property type="match status" value="1"/>
</dbReference>
<protein>
    <recommendedName>
        <fullName evidence="1">Glutamate--tRNA ligase</fullName>
        <ecNumber evidence="1">6.1.1.17</ecNumber>
    </recommendedName>
    <alternativeName>
        <fullName evidence="1">Glutamyl-tRNA synthetase</fullName>
        <shortName evidence="1">GluRS</shortName>
    </alternativeName>
</protein>
<comment type="function">
    <text evidence="1">Catalyzes the attachment of glutamate to tRNA(Glu) in a two-step reaction: glutamate is first activated by ATP to form Glu-AMP and then transferred to the acceptor end of tRNA(Glu).</text>
</comment>
<comment type="catalytic activity">
    <reaction evidence="1">
        <text>tRNA(Glu) + L-glutamate + ATP = L-glutamyl-tRNA(Glu) + AMP + diphosphate</text>
        <dbReference type="Rhea" id="RHEA:23540"/>
        <dbReference type="Rhea" id="RHEA-COMP:9663"/>
        <dbReference type="Rhea" id="RHEA-COMP:9680"/>
        <dbReference type="ChEBI" id="CHEBI:29985"/>
        <dbReference type="ChEBI" id="CHEBI:30616"/>
        <dbReference type="ChEBI" id="CHEBI:33019"/>
        <dbReference type="ChEBI" id="CHEBI:78442"/>
        <dbReference type="ChEBI" id="CHEBI:78520"/>
        <dbReference type="ChEBI" id="CHEBI:456215"/>
        <dbReference type="EC" id="6.1.1.17"/>
    </reaction>
</comment>
<comment type="subunit">
    <text evidence="1">Monomer.</text>
</comment>
<comment type="subcellular location">
    <subcellularLocation>
        <location evidence="1">Cytoplasm</location>
    </subcellularLocation>
</comment>
<comment type="similarity">
    <text evidence="1">Belongs to the class-I aminoacyl-tRNA synthetase family. Glutamate--tRNA ligase type 1 subfamily.</text>
</comment>
<reference key="1">
    <citation type="submission" date="1998-08" db="EMBL/GenBank/DDBJ databases">
        <authorList>
            <person name="Ishino Y."/>
            <person name="Kim S.I."/>
            <person name="Soell D."/>
        </authorList>
    </citation>
    <scope>NUCLEOTIDE SEQUENCE [GENOMIC DNA]</scope>
</reference>